<sequence>MNEFPVVLVINCGSSSIKFSVLDATHCDVLMAGIADGINSEDAFLSVNGGEPAKLAHHSYEGALKAIAFELEKRNLIDSVALIGHRIAHGGNIFTASAIITDEVIENIRRVSPLAPLHNYANLSGIESAQHLFPGVQQVAVFDTSFHQTMAPEAYLYGLPWKYFEELGVRRYGFHGTSHRYVSQRAHDLLALQEEDSGLVVAHLGNGASICAVRNGQSVDTSMGMTPLEGLMMGTRSGDVDFGAMAWIASETNQTLGDMERVVNKESGLLGISGLSSDLRVLEKAWHEGHERAQLAIKTFVHRIARHIAGHAASLHRLDGIIFTGGIGENSVLIRRLVIEHLAVLGVKLDHEMNSLPNSHGERIISSKDTNVICAVIPTNEEKMIALDAIHLGKVNAPVEFA</sequence>
<feature type="chain" id="PRO_0000398204" description="Propionate kinase">
    <location>
        <begin position="1"/>
        <end position="402"/>
    </location>
</feature>
<feature type="active site" description="Proton donor/acceptor" evidence="1">
    <location>
        <position position="143"/>
    </location>
</feature>
<feature type="binding site" evidence="1">
    <location>
        <position position="11"/>
    </location>
    <ligand>
        <name>ATP</name>
        <dbReference type="ChEBI" id="CHEBI:30616"/>
    </ligand>
</feature>
<feature type="binding site" evidence="1">
    <location>
        <position position="11"/>
    </location>
    <ligand>
        <name>Mg(2+)</name>
        <dbReference type="ChEBI" id="CHEBI:18420"/>
    </ligand>
</feature>
<feature type="binding site" evidence="1">
    <location>
        <position position="18"/>
    </location>
    <ligand>
        <name>ATP</name>
        <dbReference type="ChEBI" id="CHEBI:30616"/>
    </ligand>
</feature>
<feature type="binding site" evidence="1">
    <location>
        <position position="86"/>
    </location>
    <ligand>
        <name>substrate</name>
    </ligand>
</feature>
<feature type="binding site" evidence="1">
    <location>
        <position position="175"/>
    </location>
    <ligand>
        <name>ATP</name>
        <dbReference type="ChEBI" id="CHEBI:30616"/>
    </ligand>
</feature>
<feature type="binding site" evidence="1">
    <location>
        <begin position="203"/>
        <end position="207"/>
    </location>
    <ligand>
        <name>ATP</name>
        <dbReference type="ChEBI" id="CHEBI:30616"/>
    </ligand>
</feature>
<feature type="binding site" evidence="1">
    <location>
        <begin position="278"/>
        <end position="280"/>
    </location>
    <ligand>
        <name>ATP</name>
        <dbReference type="ChEBI" id="CHEBI:30616"/>
    </ligand>
</feature>
<feature type="binding site" evidence="1">
    <location>
        <begin position="326"/>
        <end position="330"/>
    </location>
    <ligand>
        <name>ATP</name>
        <dbReference type="ChEBI" id="CHEBI:30616"/>
    </ligand>
</feature>
<feature type="site" description="Transition state stabilizer" evidence="1">
    <location>
        <position position="175"/>
    </location>
</feature>
<feature type="site" description="Transition state stabilizer" evidence="1">
    <location>
        <position position="236"/>
    </location>
</feature>
<protein>
    <recommendedName>
        <fullName evidence="1">Propionate kinase</fullName>
        <ecNumber evidence="1">2.7.2.15</ecNumber>
    </recommendedName>
</protein>
<proteinExistence type="inferred from homology"/>
<name>TDCD_CITK8</name>
<dbReference type="EC" id="2.7.2.15" evidence="1"/>
<dbReference type="EMBL" id="CP000822">
    <property type="protein sequence ID" value="ABV15570.1"/>
    <property type="status" value="ALT_INIT"/>
    <property type="molecule type" value="Genomic_DNA"/>
</dbReference>
<dbReference type="RefSeq" id="WP_024130974.1">
    <property type="nucleotide sequence ID" value="NC_009792.1"/>
</dbReference>
<dbReference type="SMR" id="A8AQ07"/>
<dbReference type="STRING" id="290338.CKO_04515"/>
<dbReference type="GeneID" id="45138071"/>
<dbReference type="KEGG" id="cko:CKO_04515"/>
<dbReference type="HOGENOM" id="CLU_020352_0_1_6"/>
<dbReference type="OrthoDB" id="9802453at2"/>
<dbReference type="UniPathway" id="UPA00052">
    <property type="reaction ID" value="UER00510"/>
</dbReference>
<dbReference type="Proteomes" id="UP000008148">
    <property type="component" value="Chromosome"/>
</dbReference>
<dbReference type="GO" id="GO:0005829">
    <property type="term" value="C:cytosol"/>
    <property type="evidence" value="ECO:0007669"/>
    <property type="project" value="TreeGrafter"/>
</dbReference>
<dbReference type="GO" id="GO:0008776">
    <property type="term" value="F:acetate kinase activity"/>
    <property type="evidence" value="ECO:0007669"/>
    <property type="project" value="TreeGrafter"/>
</dbReference>
<dbReference type="GO" id="GO:0005524">
    <property type="term" value="F:ATP binding"/>
    <property type="evidence" value="ECO:0007669"/>
    <property type="project" value="UniProtKB-KW"/>
</dbReference>
<dbReference type="GO" id="GO:0046872">
    <property type="term" value="F:metal ion binding"/>
    <property type="evidence" value="ECO:0007669"/>
    <property type="project" value="UniProtKB-KW"/>
</dbReference>
<dbReference type="GO" id="GO:0008980">
    <property type="term" value="F:propionate kinase activity"/>
    <property type="evidence" value="ECO:0007669"/>
    <property type="project" value="UniProtKB-UniRule"/>
</dbReference>
<dbReference type="GO" id="GO:0006083">
    <property type="term" value="P:acetate metabolic process"/>
    <property type="evidence" value="ECO:0007669"/>
    <property type="project" value="TreeGrafter"/>
</dbReference>
<dbReference type="GO" id="GO:0070689">
    <property type="term" value="P:L-threonine catabolic process to propionate"/>
    <property type="evidence" value="ECO:0007669"/>
    <property type="project" value="UniProtKB-UniRule"/>
</dbReference>
<dbReference type="CDD" id="cd24010">
    <property type="entry name" value="ASKHA_NBD_AcK_PK"/>
    <property type="match status" value="1"/>
</dbReference>
<dbReference type="FunFam" id="3.30.420.40:FF:000165">
    <property type="entry name" value="Propionate kinase"/>
    <property type="match status" value="1"/>
</dbReference>
<dbReference type="Gene3D" id="3.30.420.40">
    <property type="match status" value="2"/>
</dbReference>
<dbReference type="HAMAP" id="MF_00020">
    <property type="entry name" value="Acetate_kinase"/>
    <property type="match status" value="1"/>
</dbReference>
<dbReference type="HAMAP" id="MF_01881">
    <property type="entry name" value="Propion_kin_subfam1"/>
    <property type="match status" value="1"/>
</dbReference>
<dbReference type="InterPro" id="IPR004372">
    <property type="entry name" value="Ac/propionate_kinase"/>
</dbReference>
<dbReference type="InterPro" id="IPR000890">
    <property type="entry name" value="Aliphatic_acid_kin_short-chain"/>
</dbReference>
<dbReference type="InterPro" id="IPR023865">
    <property type="entry name" value="Aliphatic_acid_kinase_CS"/>
</dbReference>
<dbReference type="InterPro" id="IPR043129">
    <property type="entry name" value="ATPase_NBD"/>
</dbReference>
<dbReference type="InterPro" id="IPR024917">
    <property type="entry name" value="Propionate_kinase"/>
</dbReference>
<dbReference type="NCBIfam" id="TIGR00016">
    <property type="entry name" value="ackA"/>
    <property type="match status" value="1"/>
</dbReference>
<dbReference type="NCBIfam" id="NF009045">
    <property type="entry name" value="PRK12379.1"/>
    <property type="match status" value="1"/>
</dbReference>
<dbReference type="PANTHER" id="PTHR21060">
    <property type="entry name" value="ACETATE KINASE"/>
    <property type="match status" value="1"/>
</dbReference>
<dbReference type="PANTHER" id="PTHR21060:SF17">
    <property type="entry name" value="PROPIONATE KINASE"/>
    <property type="match status" value="1"/>
</dbReference>
<dbReference type="Pfam" id="PF00871">
    <property type="entry name" value="Acetate_kinase"/>
    <property type="match status" value="1"/>
</dbReference>
<dbReference type="PIRSF" id="PIRSF000722">
    <property type="entry name" value="Acetate_prop_kin"/>
    <property type="match status" value="1"/>
</dbReference>
<dbReference type="PRINTS" id="PR00471">
    <property type="entry name" value="ACETATEKNASE"/>
</dbReference>
<dbReference type="SUPFAM" id="SSF53067">
    <property type="entry name" value="Actin-like ATPase domain"/>
    <property type="match status" value="2"/>
</dbReference>
<dbReference type="PROSITE" id="PS01075">
    <property type="entry name" value="ACETATE_KINASE_1"/>
    <property type="match status" value="1"/>
</dbReference>
<dbReference type="PROSITE" id="PS01076">
    <property type="entry name" value="ACETATE_KINASE_2"/>
    <property type="match status" value="1"/>
</dbReference>
<comment type="function">
    <text evidence="1">Catalyzes the conversion of propionyl phosphate and ADP to propionate and ATP.</text>
</comment>
<comment type="catalytic activity">
    <reaction evidence="1">
        <text>propanoate + ATP = propanoyl phosphate + ADP</text>
        <dbReference type="Rhea" id="RHEA:23148"/>
        <dbReference type="ChEBI" id="CHEBI:17272"/>
        <dbReference type="ChEBI" id="CHEBI:30616"/>
        <dbReference type="ChEBI" id="CHEBI:58933"/>
        <dbReference type="ChEBI" id="CHEBI:456216"/>
        <dbReference type="EC" id="2.7.2.15"/>
    </reaction>
</comment>
<comment type="cofactor">
    <cofactor evidence="1">
        <name>Mg(2+)</name>
        <dbReference type="ChEBI" id="CHEBI:18420"/>
    </cofactor>
</comment>
<comment type="pathway">
    <text evidence="1">Amino-acid degradation; L-threonine degradation via propanoate pathway; propanoate from L-threonine: step 4/4.</text>
</comment>
<comment type="subunit">
    <text evidence="1">Homodimer.</text>
</comment>
<comment type="similarity">
    <text evidence="1">Belongs to the acetokinase family. TdcD subfamily.</text>
</comment>
<comment type="sequence caution" evidence="2">
    <conflict type="erroneous initiation">
        <sequence resource="EMBL-CDS" id="ABV15570"/>
    </conflict>
    <text>Truncated N-terminus.</text>
</comment>
<keyword id="KW-0067">ATP-binding</keyword>
<keyword id="KW-0418">Kinase</keyword>
<keyword id="KW-0460">Magnesium</keyword>
<keyword id="KW-0479">Metal-binding</keyword>
<keyword id="KW-0547">Nucleotide-binding</keyword>
<keyword id="KW-1185">Reference proteome</keyword>
<keyword id="KW-0808">Transferase</keyword>
<gene>
    <name evidence="1" type="primary">tdcD</name>
    <name type="ordered locus">CKO_04515</name>
</gene>
<accession>A8AQ07</accession>
<evidence type="ECO:0000255" key="1">
    <source>
        <dbReference type="HAMAP-Rule" id="MF_01881"/>
    </source>
</evidence>
<evidence type="ECO:0000305" key="2"/>
<organism>
    <name type="scientific">Citrobacter koseri (strain ATCC BAA-895 / CDC 4225-83 / SGSC4696)</name>
    <dbReference type="NCBI Taxonomy" id="290338"/>
    <lineage>
        <taxon>Bacteria</taxon>
        <taxon>Pseudomonadati</taxon>
        <taxon>Pseudomonadota</taxon>
        <taxon>Gammaproteobacteria</taxon>
        <taxon>Enterobacterales</taxon>
        <taxon>Enterobacteriaceae</taxon>
        <taxon>Citrobacter</taxon>
    </lineage>
</organism>
<reference key="1">
    <citation type="submission" date="2007-08" db="EMBL/GenBank/DDBJ databases">
        <authorList>
            <consortium name="The Citrobacter koseri Genome Sequencing Project"/>
            <person name="McClelland M."/>
            <person name="Sanderson E.K."/>
            <person name="Porwollik S."/>
            <person name="Spieth J."/>
            <person name="Clifton W.S."/>
            <person name="Latreille P."/>
            <person name="Courtney L."/>
            <person name="Wang C."/>
            <person name="Pepin K."/>
            <person name="Bhonagiri V."/>
            <person name="Nash W."/>
            <person name="Johnson M."/>
            <person name="Thiruvilangam P."/>
            <person name="Wilson R."/>
        </authorList>
    </citation>
    <scope>NUCLEOTIDE SEQUENCE [LARGE SCALE GENOMIC DNA]</scope>
    <source>
        <strain>ATCC BAA-895 / CDC 4225-83 / SGSC4696</strain>
    </source>
</reference>